<accession>A1L3X0</accession>
<accession>Q589T3</accession>
<accession>Q9H5D0</accession>
<accession>Q9NT66</accession>
<feature type="initiator methionine" description="Removed" evidence="5">
    <location>
        <position position="1"/>
    </location>
</feature>
<feature type="chain" id="PRO_0000311988" description="Very long chain fatty acid elongase 7">
    <location>
        <begin position="2"/>
        <end position="281"/>
    </location>
</feature>
<feature type="topological domain" description="Lumenal" evidence="9">
    <location>
        <begin position="2"/>
        <end position="27"/>
    </location>
</feature>
<feature type="transmembrane region" description="Helical; Name=1" evidence="1">
    <location>
        <begin position="28"/>
        <end position="48"/>
    </location>
</feature>
<feature type="topological domain" description="Cytoplasmic" evidence="9">
    <location>
        <begin position="49"/>
        <end position="72"/>
    </location>
</feature>
<feature type="transmembrane region" description="Helical; Name=2" evidence="1">
    <location>
        <begin position="73"/>
        <end position="93"/>
    </location>
</feature>
<feature type="topological domain" description="Lumenal" evidence="9">
    <location>
        <begin position="94"/>
        <end position="115"/>
    </location>
</feature>
<feature type="transmembrane region" description="Helical; Name=3" evidence="1">
    <location>
        <begin position="116"/>
        <end position="136"/>
    </location>
</feature>
<feature type="topological domain" description="Cytoplasmic" evidence="7">
    <location>
        <begin position="137"/>
        <end position="142"/>
    </location>
</feature>
<feature type="transmembrane region" description="Helical; Name=4" evidence="1">
    <location>
        <begin position="143"/>
        <end position="162"/>
    </location>
</feature>
<feature type="topological domain" description="Lumenal" evidence="9">
    <location>
        <begin position="163"/>
        <end position="171"/>
    </location>
</feature>
<feature type="transmembrane region" description="Helical; Name=5" evidence="1">
    <location>
        <begin position="172"/>
        <end position="194"/>
    </location>
</feature>
<feature type="topological domain" description="Cytoplasmic" evidence="7">
    <location>
        <begin position="195"/>
        <end position="206"/>
    </location>
</feature>
<feature type="transmembrane region" description="Helical; Name=6" evidence="1">
    <location>
        <begin position="207"/>
        <end position="227"/>
    </location>
</feature>
<feature type="topological domain" description="Lumenal" evidence="9">
    <location>
        <begin position="228"/>
        <end position="236"/>
    </location>
</feature>
<feature type="transmembrane region" description="Helical; Name=7" evidence="1">
    <location>
        <begin position="237"/>
        <end position="257"/>
    </location>
</feature>
<feature type="topological domain" description="Cytoplasmic" evidence="9">
    <location>
        <begin position="258"/>
        <end position="281"/>
    </location>
</feature>
<feature type="short sequence motif" description="HxxHH motif" evidence="9">
    <location>
        <begin position="147"/>
        <end position="151"/>
    </location>
</feature>
<feature type="short sequence motif" description="Di-lysine motif" evidence="1">
    <location>
        <begin position="277"/>
        <end position="281"/>
    </location>
</feature>
<feature type="active site" description="Nucleophile" evidence="9">
    <location>
        <position position="150"/>
    </location>
</feature>
<feature type="binding site" evidence="5 10">
    <location>
        <position position="124"/>
    </location>
    <ligand>
        <name>3-oxoeicosanoyl-CoA</name>
        <dbReference type="ChEBI" id="CHEBI:65115"/>
    </ligand>
</feature>
<feature type="binding site" evidence="5 10">
    <location>
        <position position="137"/>
    </location>
    <ligand>
        <name>3-oxoeicosanoyl-CoA</name>
        <dbReference type="ChEBI" id="CHEBI:65115"/>
    </ligand>
</feature>
<feature type="binding site" evidence="5 10">
    <location>
        <position position="139"/>
    </location>
    <ligand>
        <name>3-oxoeicosanoyl-CoA</name>
        <dbReference type="ChEBI" id="CHEBI:65115"/>
    </ligand>
</feature>
<feature type="binding site" evidence="5 10">
    <location>
        <position position="142"/>
    </location>
    <ligand>
        <name>3-oxoeicosanoyl-CoA</name>
        <dbReference type="ChEBI" id="CHEBI:65115"/>
    </ligand>
</feature>
<feature type="binding site" evidence="5 10">
    <location>
        <position position="147"/>
    </location>
    <ligand>
        <name>3-oxoeicosanoyl-CoA</name>
        <dbReference type="ChEBI" id="CHEBI:65115"/>
    </ligand>
</feature>
<feature type="binding site" evidence="5 10">
    <location>
        <position position="187"/>
    </location>
    <ligand>
        <name>3-oxoeicosanoyl-CoA</name>
        <dbReference type="ChEBI" id="CHEBI:65115"/>
    </ligand>
</feature>
<feature type="binding site" evidence="5 10">
    <location>
        <position position="204"/>
    </location>
    <ligand>
        <name>3-oxoeicosanoyl-CoA</name>
        <dbReference type="ChEBI" id="CHEBI:65115"/>
    </ligand>
</feature>
<feature type="binding site" evidence="5 10">
    <location>
        <position position="208"/>
    </location>
    <ligand>
        <name>3-oxoeicosanoyl-CoA</name>
        <dbReference type="ChEBI" id="CHEBI:65115"/>
    </ligand>
</feature>
<feature type="binding site" evidence="5 10">
    <location>
        <position position="211"/>
    </location>
    <ligand>
        <name>3-oxoeicosanoyl-CoA</name>
        <dbReference type="ChEBI" id="CHEBI:65115"/>
    </ligand>
</feature>
<feature type="binding site" evidence="5 10">
    <location>
        <position position="266"/>
    </location>
    <ligand>
        <name>3-oxoeicosanoyl-CoA</name>
        <dbReference type="ChEBI" id="CHEBI:65115"/>
    </ligand>
</feature>
<feature type="modified residue" description="N-acetylalanine" evidence="5">
    <location>
        <position position="2"/>
    </location>
</feature>
<feature type="disulfide bond" evidence="5">
    <location>
        <begin position="99"/>
        <end position="231"/>
    </location>
</feature>
<feature type="mutagenesis site" description="Loss of activity alone or when associated with A-151." evidence="4 5">
    <original>H</original>
    <variation>A</variation>
    <location>
        <position position="150"/>
    </location>
</feature>
<feature type="mutagenesis site" description="Loss of activity; when associated with A-150." evidence="4">
    <original>H</original>
    <variation>A</variation>
    <location>
        <position position="151"/>
    </location>
</feature>
<feature type="sequence conflict" description="In Ref. 3; BAB15697." evidence="7" ref="3">
    <original>N</original>
    <variation>K</variation>
    <location>
        <position position="16"/>
    </location>
</feature>
<feature type="sequence conflict" description="In Ref. 3; BAB15697." evidence="7" ref="3">
    <original>Q</original>
    <variation>H</variation>
    <location>
        <position position="37"/>
    </location>
</feature>
<feature type="sequence conflict" description="In Ref. 3; BAB15697." evidence="7" ref="3">
    <original>V</original>
    <variation>E</variation>
    <location>
        <position position="80"/>
    </location>
</feature>
<feature type="sequence conflict" description="In Ref. 3; BAB15697." evidence="7" ref="3">
    <original>S</original>
    <variation>C</variation>
    <location>
        <position position="123"/>
    </location>
</feature>
<feature type="sequence conflict" description="In Ref. 1; BAD93238." evidence="7" ref="1">
    <original>L</original>
    <variation>P</variation>
    <location>
        <position position="250"/>
    </location>
</feature>
<feature type="helix" evidence="11">
    <location>
        <begin position="17"/>
        <end position="20"/>
    </location>
</feature>
<feature type="helix" evidence="11">
    <location>
        <begin position="23"/>
        <end position="25"/>
    </location>
</feature>
<feature type="helix" evidence="11">
    <location>
        <begin position="35"/>
        <end position="49"/>
    </location>
</feature>
<feature type="helix" evidence="11">
    <location>
        <begin position="51"/>
        <end position="56"/>
    </location>
</feature>
<feature type="helix" evidence="11">
    <location>
        <begin position="65"/>
        <end position="88"/>
    </location>
</feature>
<feature type="turn" evidence="11">
    <location>
        <begin position="89"/>
        <end position="94"/>
    </location>
</feature>
<feature type="strand" evidence="11">
    <location>
        <begin position="97"/>
        <end position="99"/>
    </location>
</feature>
<feature type="helix" evidence="11">
    <location>
        <begin position="108"/>
        <end position="126"/>
    </location>
</feature>
<feature type="helix" evidence="11">
    <location>
        <begin position="129"/>
        <end position="136"/>
    </location>
</feature>
<feature type="helix" evidence="11">
    <location>
        <begin position="140"/>
        <end position="142"/>
    </location>
</feature>
<feature type="helix" evidence="11">
    <location>
        <begin position="145"/>
        <end position="164"/>
    </location>
</feature>
<feature type="helix" evidence="11">
    <location>
        <begin position="168"/>
        <end position="171"/>
    </location>
</feature>
<feature type="helix" evidence="11">
    <location>
        <begin position="172"/>
        <end position="192"/>
    </location>
</feature>
<feature type="helix" evidence="11">
    <location>
        <begin position="195"/>
        <end position="198"/>
    </location>
</feature>
<feature type="helix" evidence="11">
    <location>
        <begin position="204"/>
        <end position="227"/>
    </location>
</feature>
<feature type="helix" evidence="11">
    <location>
        <begin position="237"/>
        <end position="260"/>
    </location>
</feature>
<dbReference type="EC" id="2.3.1.199" evidence="1 3 4 5"/>
<dbReference type="EMBL" id="AB181393">
    <property type="protein sequence ID" value="BAD93238.1"/>
    <property type="molecule type" value="mRNA"/>
</dbReference>
<dbReference type="EMBL" id="BC130310">
    <property type="protein sequence ID" value="AAI30311.1"/>
    <property type="molecule type" value="mRNA"/>
</dbReference>
<dbReference type="EMBL" id="BC130312">
    <property type="protein sequence ID" value="AAI30313.1"/>
    <property type="molecule type" value="mRNA"/>
</dbReference>
<dbReference type="EMBL" id="AK027216">
    <property type="protein sequence ID" value="BAB15697.1"/>
    <property type="status" value="ALT_SEQ"/>
    <property type="molecule type" value="mRNA"/>
</dbReference>
<dbReference type="EMBL" id="AL137506">
    <property type="protein sequence ID" value="CAB70777.1"/>
    <property type="molecule type" value="mRNA"/>
</dbReference>
<dbReference type="CCDS" id="CCDS34164.1"/>
<dbReference type="PIR" id="T46257">
    <property type="entry name" value="T46257"/>
</dbReference>
<dbReference type="RefSeq" id="NP_001098028.1">
    <property type="nucleotide sequence ID" value="NM_001104558.2"/>
</dbReference>
<dbReference type="RefSeq" id="NP_001284546.1">
    <property type="nucleotide sequence ID" value="NM_001297617.1"/>
</dbReference>
<dbReference type="RefSeq" id="NP_001284547.1">
    <property type="nucleotide sequence ID" value="NM_001297618.1"/>
</dbReference>
<dbReference type="RefSeq" id="NP_079206.2">
    <property type="nucleotide sequence ID" value="NM_024930.3"/>
</dbReference>
<dbReference type="RefSeq" id="XP_005248663.1">
    <property type="nucleotide sequence ID" value="XM_005248606.6"/>
</dbReference>
<dbReference type="RefSeq" id="XP_006714758.1">
    <property type="nucleotide sequence ID" value="XM_006714695.5"/>
</dbReference>
<dbReference type="RefSeq" id="XP_011541953.1">
    <property type="nucleotide sequence ID" value="XM_011543651.4"/>
</dbReference>
<dbReference type="RefSeq" id="XP_016865374.1">
    <property type="nucleotide sequence ID" value="XM_017009885.1"/>
</dbReference>
<dbReference type="RefSeq" id="XP_054209528.1">
    <property type="nucleotide sequence ID" value="XM_054353553.1"/>
</dbReference>
<dbReference type="RefSeq" id="XP_054209529.1">
    <property type="nucleotide sequence ID" value="XM_054353554.1"/>
</dbReference>
<dbReference type="RefSeq" id="XP_054209530.1">
    <property type="nucleotide sequence ID" value="XM_054353555.1"/>
</dbReference>
<dbReference type="PDB" id="6Y7F">
    <property type="method" value="X-ray"/>
    <property type="resolution" value="2.05 A"/>
    <property type="chains" value="A/B=1-281"/>
</dbReference>
<dbReference type="PDBsum" id="6Y7F"/>
<dbReference type="SMR" id="A1L3X0"/>
<dbReference type="BioGRID" id="123056">
    <property type="interactions" value="23"/>
</dbReference>
<dbReference type="FunCoup" id="A1L3X0">
    <property type="interactions" value="817"/>
</dbReference>
<dbReference type="IntAct" id="A1L3X0">
    <property type="interactions" value="14"/>
</dbReference>
<dbReference type="STRING" id="9606.ENSP00000424123"/>
<dbReference type="BindingDB" id="A1L3X0"/>
<dbReference type="ChEMBL" id="CHEMBL5169094"/>
<dbReference type="SwissLipids" id="SLP:000000250"/>
<dbReference type="iPTMnet" id="A1L3X0"/>
<dbReference type="PhosphoSitePlus" id="A1L3X0"/>
<dbReference type="SwissPalm" id="A1L3X0"/>
<dbReference type="BioMuta" id="ELOVL7"/>
<dbReference type="jPOST" id="A1L3X0"/>
<dbReference type="MassIVE" id="A1L3X0"/>
<dbReference type="PaxDb" id="9606-ENSP00000424123"/>
<dbReference type="PeptideAtlas" id="A1L3X0"/>
<dbReference type="ProteomicsDB" id="143"/>
<dbReference type="Pumba" id="A1L3X0"/>
<dbReference type="Antibodypedia" id="23642">
    <property type="antibodies" value="147 antibodies from 24 providers"/>
</dbReference>
<dbReference type="DNASU" id="79993"/>
<dbReference type="Ensembl" id="ENST00000425382.5">
    <property type="protein sequence ID" value="ENSP00000402634.1"/>
    <property type="gene ID" value="ENSG00000164181.14"/>
</dbReference>
<dbReference type="Ensembl" id="ENST00000508821.6">
    <property type="protein sequence ID" value="ENSP00000424123.1"/>
    <property type="gene ID" value="ENSG00000164181.14"/>
</dbReference>
<dbReference type="GeneID" id="79993"/>
<dbReference type="KEGG" id="hsa:79993"/>
<dbReference type="MANE-Select" id="ENST00000508821.6">
    <property type="protein sequence ID" value="ENSP00000424123.1"/>
    <property type="RefSeq nucleotide sequence ID" value="NM_024930.3"/>
    <property type="RefSeq protein sequence ID" value="NP_079206.2"/>
</dbReference>
<dbReference type="UCSC" id="uc003jsi.5">
    <property type="organism name" value="human"/>
</dbReference>
<dbReference type="AGR" id="HGNC:26292"/>
<dbReference type="CTD" id="79993"/>
<dbReference type="DisGeNET" id="79993"/>
<dbReference type="GeneCards" id="ELOVL7"/>
<dbReference type="HGNC" id="HGNC:26292">
    <property type="gene designation" value="ELOVL7"/>
</dbReference>
<dbReference type="HPA" id="ENSG00000164181">
    <property type="expression patterns" value="Low tissue specificity"/>
</dbReference>
<dbReference type="MIM" id="614451">
    <property type="type" value="gene"/>
</dbReference>
<dbReference type="neXtProt" id="NX_A1L3X0"/>
<dbReference type="OpenTargets" id="ENSG00000164181"/>
<dbReference type="PharmGKB" id="PA134934034"/>
<dbReference type="VEuPathDB" id="HostDB:ENSG00000164181"/>
<dbReference type="eggNOG" id="KOG3071">
    <property type="taxonomic scope" value="Eukaryota"/>
</dbReference>
<dbReference type="GeneTree" id="ENSGT01050000244838"/>
<dbReference type="InParanoid" id="A1L3X0"/>
<dbReference type="OMA" id="EFMQNAD"/>
<dbReference type="OrthoDB" id="434092at2759"/>
<dbReference type="PAN-GO" id="A1L3X0">
    <property type="GO annotations" value="7 GO annotations based on evolutionary models"/>
</dbReference>
<dbReference type="PhylomeDB" id="A1L3X0"/>
<dbReference type="TreeFam" id="TF323454"/>
<dbReference type="BioCyc" id="MetaCyc:ENSG00000164181-MONOMER"/>
<dbReference type="BRENDA" id="2.3.1.199">
    <property type="organism ID" value="2681"/>
</dbReference>
<dbReference type="PathwayCommons" id="A1L3X0"/>
<dbReference type="Reactome" id="R-HSA-75876">
    <property type="pathway name" value="Synthesis of very long-chain fatty acyl-CoAs"/>
</dbReference>
<dbReference type="SABIO-RK" id="A1L3X0"/>
<dbReference type="SignaLink" id="A1L3X0"/>
<dbReference type="SIGNOR" id="A1L3X0"/>
<dbReference type="UniPathway" id="UPA00094"/>
<dbReference type="BioGRID-ORCS" id="79993">
    <property type="hits" value="14 hits in 1153 CRISPR screens"/>
</dbReference>
<dbReference type="CD-CODE" id="91857CE7">
    <property type="entry name" value="Nucleolus"/>
</dbReference>
<dbReference type="ChiTaRS" id="ELOVL7">
    <property type="organism name" value="human"/>
</dbReference>
<dbReference type="GenomeRNAi" id="79993"/>
<dbReference type="Pharos" id="A1L3X0">
    <property type="development level" value="Tbio"/>
</dbReference>
<dbReference type="PRO" id="PR:A1L3X0"/>
<dbReference type="Proteomes" id="UP000005640">
    <property type="component" value="Chromosome 5"/>
</dbReference>
<dbReference type="RNAct" id="A1L3X0">
    <property type="molecule type" value="protein"/>
</dbReference>
<dbReference type="Bgee" id="ENSG00000164181">
    <property type="expression patterns" value="Expressed in upper arm skin and 163 other cell types or tissues"/>
</dbReference>
<dbReference type="ExpressionAtlas" id="A1L3X0">
    <property type="expression patterns" value="baseline and differential"/>
</dbReference>
<dbReference type="GO" id="GO:0005783">
    <property type="term" value="C:endoplasmic reticulum"/>
    <property type="evidence" value="ECO:0000314"/>
    <property type="project" value="UniProtKB"/>
</dbReference>
<dbReference type="GO" id="GO:0005789">
    <property type="term" value="C:endoplasmic reticulum membrane"/>
    <property type="evidence" value="ECO:0000318"/>
    <property type="project" value="GO_Central"/>
</dbReference>
<dbReference type="GO" id="GO:0009922">
    <property type="term" value="F:fatty acid elongase activity"/>
    <property type="evidence" value="ECO:0000269"/>
    <property type="project" value="Reactome"/>
</dbReference>
<dbReference type="GO" id="GO:0034625">
    <property type="term" value="P:fatty acid elongation, monounsaturated fatty acid"/>
    <property type="evidence" value="ECO:0000318"/>
    <property type="project" value="GO_Central"/>
</dbReference>
<dbReference type="GO" id="GO:0034626">
    <property type="term" value="P:fatty acid elongation, polyunsaturated fatty acid"/>
    <property type="evidence" value="ECO:0000314"/>
    <property type="project" value="UniProtKB"/>
</dbReference>
<dbReference type="GO" id="GO:0019367">
    <property type="term" value="P:fatty acid elongation, saturated fatty acid"/>
    <property type="evidence" value="ECO:0000314"/>
    <property type="project" value="UniProtKB"/>
</dbReference>
<dbReference type="GO" id="GO:0035338">
    <property type="term" value="P:long-chain fatty-acyl-CoA biosynthetic process"/>
    <property type="evidence" value="ECO:0000304"/>
    <property type="project" value="Reactome"/>
</dbReference>
<dbReference type="GO" id="GO:0030148">
    <property type="term" value="P:sphingolipid biosynthetic process"/>
    <property type="evidence" value="ECO:0000318"/>
    <property type="project" value="GO_Central"/>
</dbReference>
<dbReference type="GO" id="GO:0006636">
    <property type="term" value="P:unsaturated fatty acid biosynthetic process"/>
    <property type="evidence" value="ECO:0007669"/>
    <property type="project" value="UniProtKB-UniRule"/>
</dbReference>
<dbReference type="GO" id="GO:0042761">
    <property type="term" value="P:very long-chain fatty acid biosynthetic process"/>
    <property type="evidence" value="ECO:0000314"/>
    <property type="project" value="UniProtKB"/>
</dbReference>
<dbReference type="HAMAP" id="MF_03207">
    <property type="entry name" value="VLCF_elongase_7"/>
    <property type="match status" value="1"/>
</dbReference>
<dbReference type="InterPro" id="IPR030457">
    <property type="entry name" value="ELO_CS"/>
</dbReference>
<dbReference type="InterPro" id="IPR002076">
    <property type="entry name" value="ELO_fam"/>
</dbReference>
<dbReference type="InterPro" id="IPR033670">
    <property type="entry name" value="ELOVL7"/>
</dbReference>
<dbReference type="PANTHER" id="PTHR11157:SF118">
    <property type="entry name" value="ELONGATION OF VERY LONG CHAIN FATTY ACIDS PROTEIN 7"/>
    <property type="match status" value="1"/>
</dbReference>
<dbReference type="PANTHER" id="PTHR11157">
    <property type="entry name" value="FATTY ACID ACYL TRANSFERASE-RELATED"/>
    <property type="match status" value="1"/>
</dbReference>
<dbReference type="Pfam" id="PF01151">
    <property type="entry name" value="ELO"/>
    <property type="match status" value="1"/>
</dbReference>
<dbReference type="PROSITE" id="PS01188">
    <property type="entry name" value="ELO"/>
    <property type="match status" value="1"/>
</dbReference>
<sequence length="281" mass="33356">MAFSDLTSRTVHLYDNWIKDADPRVEDWLLMSSPLPQTILLGFYVYFVTSLGPKLMENRKPFELKKAMITYNFFIVLFSVYMCYEFVMSGWGIGYSFRCDIVDYSRSPTALRMARTCWLYYFSKFIELLDTIFFVLRKKNSQVTFLHVFHHTIMPWTWWFGVKFAAGGLGTFHALLNTAVHVVMYSYYGLSALGPAYQKYLWWKKYLTSLQLVQFVIVAIHISQFFFMEDCKYQFPVFACIIMSYSFMFLLLFLHFWYRAYTKGQRLPKTVKNGTCKNKDN</sequence>
<reference key="1">
    <citation type="submission" date="2004-06" db="EMBL/GenBank/DDBJ databases">
        <title>Overexpressed gene in prostate cancer.</title>
        <authorList>
            <person name="Tamura K."/>
            <person name="Nakagawa H."/>
            <person name="Nakamura Y."/>
        </authorList>
    </citation>
    <scope>NUCLEOTIDE SEQUENCE [MRNA]</scope>
    <source>
        <tissue>Prostate</tissue>
    </source>
</reference>
<reference key="2">
    <citation type="journal article" date="2004" name="Genome Res.">
        <title>The status, quality, and expansion of the NIH full-length cDNA project: the Mammalian Gene Collection (MGC).</title>
        <authorList>
            <consortium name="The MGC Project Team"/>
        </authorList>
    </citation>
    <scope>NUCLEOTIDE SEQUENCE [LARGE SCALE MRNA]</scope>
</reference>
<reference key="3">
    <citation type="journal article" date="2004" name="Nat. Genet.">
        <title>Complete sequencing and characterization of 21,243 full-length human cDNAs.</title>
        <authorList>
            <person name="Ota T."/>
            <person name="Suzuki Y."/>
            <person name="Nishikawa T."/>
            <person name="Otsuki T."/>
            <person name="Sugiyama T."/>
            <person name="Irie R."/>
            <person name="Wakamatsu A."/>
            <person name="Hayashi K."/>
            <person name="Sato H."/>
            <person name="Nagai K."/>
            <person name="Kimura K."/>
            <person name="Makita H."/>
            <person name="Sekine M."/>
            <person name="Obayashi M."/>
            <person name="Nishi T."/>
            <person name="Shibahara T."/>
            <person name="Tanaka T."/>
            <person name="Ishii S."/>
            <person name="Yamamoto J."/>
            <person name="Saito K."/>
            <person name="Kawai Y."/>
            <person name="Isono Y."/>
            <person name="Nakamura Y."/>
            <person name="Nagahari K."/>
            <person name="Murakami K."/>
            <person name="Yasuda T."/>
            <person name="Iwayanagi T."/>
            <person name="Wagatsuma M."/>
            <person name="Shiratori A."/>
            <person name="Sudo H."/>
            <person name="Hosoiri T."/>
            <person name="Kaku Y."/>
            <person name="Kodaira H."/>
            <person name="Kondo H."/>
            <person name="Sugawara M."/>
            <person name="Takahashi M."/>
            <person name="Kanda K."/>
            <person name="Yokoi T."/>
            <person name="Furuya T."/>
            <person name="Kikkawa E."/>
            <person name="Omura Y."/>
            <person name="Abe K."/>
            <person name="Kamihara K."/>
            <person name="Katsuta N."/>
            <person name="Sato K."/>
            <person name="Tanikawa M."/>
            <person name="Yamazaki M."/>
            <person name="Ninomiya K."/>
            <person name="Ishibashi T."/>
            <person name="Yamashita H."/>
            <person name="Murakawa K."/>
            <person name="Fujimori K."/>
            <person name="Tanai H."/>
            <person name="Kimata M."/>
            <person name="Watanabe M."/>
            <person name="Hiraoka S."/>
            <person name="Chiba Y."/>
            <person name="Ishida S."/>
            <person name="Ono Y."/>
            <person name="Takiguchi S."/>
            <person name="Watanabe S."/>
            <person name="Yosida M."/>
            <person name="Hotuta T."/>
            <person name="Kusano J."/>
            <person name="Kanehori K."/>
            <person name="Takahashi-Fujii A."/>
            <person name="Hara H."/>
            <person name="Tanase T.-O."/>
            <person name="Nomura Y."/>
            <person name="Togiya S."/>
            <person name="Komai F."/>
            <person name="Hara R."/>
            <person name="Takeuchi K."/>
            <person name="Arita M."/>
            <person name="Imose N."/>
            <person name="Musashino K."/>
            <person name="Yuuki H."/>
            <person name="Oshima A."/>
            <person name="Sasaki N."/>
            <person name="Aotsuka S."/>
            <person name="Yoshikawa Y."/>
            <person name="Matsunawa H."/>
            <person name="Ichihara T."/>
            <person name="Shiohata N."/>
            <person name="Sano S."/>
            <person name="Moriya S."/>
            <person name="Momiyama H."/>
            <person name="Satoh N."/>
            <person name="Takami S."/>
            <person name="Terashima Y."/>
            <person name="Suzuki O."/>
            <person name="Nakagawa S."/>
            <person name="Senoh A."/>
            <person name="Mizoguchi H."/>
            <person name="Goto Y."/>
            <person name="Shimizu F."/>
            <person name="Wakebe H."/>
            <person name="Hishigaki H."/>
            <person name="Watanabe T."/>
            <person name="Sugiyama A."/>
            <person name="Takemoto M."/>
            <person name="Kawakami B."/>
            <person name="Yamazaki M."/>
            <person name="Watanabe K."/>
            <person name="Kumagai A."/>
            <person name="Itakura S."/>
            <person name="Fukuzumi Y."/>
            <person name="Fujimori Y."/>
            <person name="Komiyama M."/>
            <person name="Tashiro H."/>
            <person name="Tanigami A."/>
            <person name="Fujiwara T."/>
            <person name="Ono T."/>
            <person name="Yamada K."/>
            <person name="Fujii Y."/>
            <person name="Ozaki K."/>
            <person name="Hirao M."/>
            <person name="Ohmori Y."/>
            <person name="Kawabata A."/>
            <person name="Hikiji T."/>
            <person name="Kobatake N."/>
            <person name="Inagaki H."/>
            <person name="Ikema Y."/>
            <person name="Okamoto S."/>
            <person name="Okitani R."/>
            <person name="Kawakami T."/>
            <person name="Noguchi S."/>
            <person name="Itoh T."/>
            <person name="Shigeta K."/>
            <person name="Senba T."/>
            <person name="Matsumura K."/>
            <person name="Nakajima Y."/>
            <person name="Mizuno T."/>
            <person name="Morinaga M."/>
            <person name="Sasaki M."/>
            <person name="Togashi T."/>
            <person name="Oyama M."/>
            <person name="Hata H."/>
            <person name="Watanabe M."/>
            <person name="Komatsu T."/>
            <person name="Mizushima-Sugano J."/>
            <person name="Satoh T."/>
            <person name="Shirai Y."/>
            <person name="Takahashi Y."/>
            <person name="Nakagawa K."/>
            <person name="Okumura K."/>
            <person name="Nagase T."/>
            <person name="Nomura N."/>
            <person name="Kikuchi H."/>
            <person name="Masuho Y."/>
            <person name="Yamashita R."/>
            <person name="Nakai K."/>
            <person name="Yada T."/>
            <person name="Nakamura Y."/>
            <person name="Ohara O."/>
            <person name="Isogai T."/>
            <person name="Sugano S."/>
        </authorList>
    </citation>
    <scope>NUCLEOTIDE SEQUENCE [LARGE SCALE MRNA] OF 12-281</scope>
    <source>
        <tissue>Lung</tissue>
    </source>
</reference>
<reference key="4">
    <citation type="journal article" date="2007" name="BMC Genomics">
        <title>The full-ORF clone resource of the German cDNA consortium.</title>
        <authorList>
            <person name="Bechtel S."/>
            <person name="Rosenfelder H."/>
            <person name="Duda A."/>
            <person name="Schmidt C.P."/>
            <person name="Ernst U."/>
            <person name="Wellenreuther R."/>
            <person name="Mehrle A."/>
            <person name="Schuster C."/>
            <person name="Bahr A."/>
            <person name="Bloecker H."/>
            <person name="Heubner D."/>
            <person name="Hoerlein A."/>
            <person name="Michel G."/>
            <person name="Wedler H."/>
            <person name="Koehrer K."/>
            <person name="Ottenwaelder B."/>
            <person name="Poustka A."/>
            <person name="Wiemann S."/>
            <person name="Schupp I."/>
        </authorList>
    </citation>
    <scope>NUCLEOTIDE SEQUENCE [LARGE SCALE MRNA] OF 124-281</scope>
    <source>
        <tissue>Amygdala</tissue>
    </source>
</reference>
<reference key="5">
    <citation type="journal article" date="2009" name="Cancer Res.">
        <title>Novel lipogenic enzyme ELOVL7 is involved in prostate cancer growth through saturated long-chain fatty acid metabolism.</title>
        <authorList>
            <person name="Tamura K."/>
            <person name="Makino A."/>
            <person name="Hullin-Matsuda F."/>
            <person name="Kobayashi T."/>
            <person name="Furihata M."/>
            <person name="Chung S."/>
            <person name="Ashida S."/>
            <person name="Miki T."/>
            <person name="Fujioka T."/>
            <person name="Shuin T."/>
            <person name="Nakamura Y."/>
            <person name="Nakagawa H."/>
        </authorList>
    </citation>
    <scope>FUNCTION</scope>
</reference>
<reference key="6">
    <citation type="journal article" date="2010" name="Proc. Natl. Acad. Sci. U.S.A.">
        <title>ELOVL1 production of C24 acyl-CoAs is linked to C24 sphingolipid synthesis.</title>
        <authorList>
            <person name="Ohno Y."/>
            <person name="Suto S."/>
            <person name="Yamanaka M."/>
            <person name="Mizutani Y."/>
            <person name="Mitsutake S."/>
            <person name="Igarashi Y."/>
            <person name="Sassa T."/>
            <person name="Kihara A."/>
        </authorList>
    </citation>
    <scope>FUNCTION</scope>
    <scope>CATALYTIC ACTIVITY</scope>
    <scope>PATHWAY</scope>
    <scope>SUBCELLULAR LOCATION</scope>
    <scope>TISSUE SPECIFICITY</scope>
</reference>
<reference key="7">
    <citation type="journal article" date="2011" name="FEBS Lett.">
        <title>Biochemical characterization of the very long-chain fatty acid elongase ELOVL7.</title>
        <authorList>
            <person name="Naganuma T."/>
            <person name="Sato Y."/>
            <person name="Sassa T."/>
            <person name="Ohno Y."/>
            <person name="Kihara A."/>
        </authorList>
    </citation>
    <scope>FUNCTION</scope>
    <scope>CATALYTIC ACTIVITY</scope>
    <scope>PATHWAY</scope>
    <scope>BIOPHYSICOCHEMICAL PROPERTIES</scope>
    <scope>MUTAGENESIS OF HIS-150 AND HIS-151</scope>
</reference>
<reference key="8">
    <citation type="journal article" date="2024" name="Biochem. Biophys. Res. Commun.">
        <title>The 3-hydroxyacyl-CoA dehydratase 1/2 form complex with trans-2-enoyl-CoA reductase involved in substrates transfer in very long chain fatty acid elongation.</title>
        <authorList>
            <person name="Zhou Y."/>
            <person name="Lv R."/>
            <person name="Ye R.D."/>
            <person name="Ren R."/>
            <person name="Yu L."/>
        </authorList>
    </citation>
    <scope>INTERACTION WITH TECR</scope>
</reference>
<reference evidence="10" key="9">
    <citation type="journal article" date="2021" name="Nat. Struct. Mol. Biol.">
        <title>The structural basis of fatty acid elongation by the ELOVL elongases.</title>
        <authorList>
            <person name="Nie L."/>
            <person name="Pascoa T.C."/>
            <person name="Pike A.C.W."/>
            <person name="Bushell S.R."/>
            <person name="Quigley A."/>
            <person name="Ruda G.F."/>
            <person name="Chu A."/>
            <person name="Cole V."/>
            <person name="Speedman D."/>
            <person name="Moreira T."/>
            <person name="Shrestha L."/>
            <person name="Mukhopadhyay S.M.M."/>
            <person name="Burgess-Brown N.A."/>
            <person name="Love J.D."/>
            <person name="Brennan P.E."/>
            <person name="Carpenter E.P."/>
        </authorList>
    </citation>
    <scope>X-RAY CRYSTALLOGRAPHY (2.05 ANGSTROMS) IN COMPLEX WITH 3-KETO ACYL-COA</scope>
    <scope>FUNCTION</scope>
    <scope>CATALYTIC ACTIVITY</scope>
    <scope>MUTAGENESIS OF HIS-150</scope>
    <scope>DISULFIDE BOND</scope>
    <scope>ACETYLATION AT ALA-2</scope>
    <scope>CLEAVAGE OF INITIATOR METHIONINE</scope>
    <scope>TOPOLOGY</scope>
    <scope>HXXHH MOTIF</scope>
    <scope>BINDING</scope>
    <scope>SUBUNIT</scope>
</reference>
<comment type="function">
    <text evidence="1 2 3 4 5">Catalyzes the first and rate-limiting reaction of the four reactions that constitute the long-chain fatty acids elongation cycle. This endoplasmic reticulum-bound enzymatic process allows the addition of 2 carbons to the chain of long- and very long-chain fatty acids (VLCFAs) per cycle. Condensing enzyme with higher activity toward C18 acyl-CoAs, especially C18:3(n-3) acyl-CoAs and C18:3(n-6)-CoAs. Also active toward C20:4-, C18:0-, C18:1-, C18:2- and C16:0-CoAs, and weakly toward C20:0-CoA. Little or no activity toward C22:0-, C24:0-, or C26:0-CoAs. May participate in the production of saturated and polyunsaturated VLCFAs of different chain lengths that are involved in multiple biological processes as precursors of membrane lipids and lipid mediators.</text>
</comment>
<comment type="catalytic activity">
    <reaction evidence="1 3 4 5">
        <text>a very-long-chain acyl-CoA + malonyl-CoA + H(+) = a very-long-chain 3-oxoacyl-CoA + CO2 + CoA</text>
        <dbReference type="Rhea" id="RHEA:32727"/>
        <dbReference type="ChEBI" id="CHEBI:15378"/>
        <dbReference type="ChEBI" id="CHEBI:16526"/>
        <dbReference type="ChEBI" id="CHEBI:57287"/>
        <dbReference type="ChEBI" id="CHEBI:57384"/>
        <dbReference type="ChEBI" id="CHEBI:90725"/>
        <dbReference type="ChEBI" id="CHEBI:90736"/>
        <dbReference type="EC" id="2.3.1.199"/>
    </reaction>
    <physiologicalReaction direction="left-to-right" evidence="8">
        <dbReference type="Rhea" id="RHEA:32728"/>
    </physiologicalReaction>
</comment>
<comment type="catalytic activity">
    <reaction evidence="3 4">
        <text>eicosanoyl-CoA + malonyl-CoA + H(+) = 3-oxodocosanoyl-CoA + CO2 + CoA</text>
        <dbReference type="Rhea" id="RHEA:35327"/>
        <dbReference type="ChEBI" id="CHEBI:15378"/>
        <dbReference type="ChEBI" id="CHEBI:16526"/>
        <dbReference type="ChEBI" id="CHEBI:57287"/>
        <dbReference type="ChEBI" id="CHEBI:57380"/>
        <dbReference type="ChEBI" id="CHEBI:57384"/>
        <dbReference type="ChEBI" id="CHEBI:71451"/>
    </reaction>
    <physiologicalReaction direction="left-to-right" evidence="8">
        <dbReference type="Rhea" id="RHEA:35328"/>
    </physiologicalReaction>
</comment>
<comment type="catalytic activity">
    <reaction evidence="3 4">
        <text>(5Z,8Z,11Z,14Z)-eicosatetraenoyl-CoA + malonyl-CoA + H(+) = (7Z,10Z,13Z,16Z)-3-oxodocosatetraenoyl-CoA + CO2 + CoA</text>
        <dbReference type="Rhea" id="RHEA:36475"/>
        <dbReference type="ChEBI" id="CHEBI:15378"/>
        <dbReference type="ChEBI" id="CHEBI:16526"/>
        <dbReference type="ChEBI" id="CHEBI:57287"/>
        <dbReference type="ChEBI" id="CHEBI:57368"/>
        <dbReference type="ChEBI" id="CHEBI:57384"/>
        <dbReference type="ChEBI" id="CHEBI:73852"/>
    </reaction>
    <physiologicalReaction direction="left-to-right" evidence="8">
        <dbReference type="Rhea" id="RHEA:36476"/>
    </physiologicalReaction>
</comment>
<comment type="catalytic activity">
    <reaction evidence="3 4">
        <text>(6Z,9Z,12Z)-octadecatrienoyl-CoA + malonyl-CoA + H(+) = (8Z,11Z,14Z)-3-oxoeicosatrienoyl-CoA + CO2 + CoA</text>
        <dbReference type="Rhea" id="RHEA:35379"/>
        <dbReference type="ChEBI" id="CHEBI:15378"/>
        <dbReference type="ChEBI" id="CHEBI:16526"/>
        <dbReference type="ChEBI" id="CHEBI:57287"/>
        <dbReference type="ChEBI" id="CHEBI:57363"/>
        <dbReference type="ChEBI" id="CHEBI:57384"/>
        <dbReference type="ChEBI" id="CHEBI:71481"/>
    </reaction>
    <physiologicalReaction direction="left-to-right" evidence="8">
        <dbReference type="Rhea" id="RHEA:35380"/>
    </physiologicalReaction>
</comment>
<comment type="catalytic activity">
    <reaction evidence="3 4">
        <text>(9Z,12Z)-octadecadienoyl-CoA + malonyl-CoA + H(+) = (11Z,14Z)-3-oxoicosa-11,14-dienoyl-CoA + CO2 + CoA</text>
        <dbReference type="Rhea" id="RHEA:36503"/>
        <dbReference type="ChEBI" id="CHEBI:15378"/>
        <dbReference type="ChEBI" id="CHEBI:16526"/>
        <dbReference type="ChEBI" id="CHEBI:57287"/>
        <dbReference type="ChEBI" id="CHEBI:57383"/>
        <dbReference type="ChEBI" id="CHEBI:57384"/>
        <dbReference type="ChEBI" id="CHEBI:74012"/>
    </reaction>
    <physiologicalReaction direction="left-to-right" evidence="8">
        <dbReference type="Rhea" id="RHEA:36504"/>
    </physiologicalReaction>
</comment>
<comment type="catalytic activity">
    <reaction evidence="3 4">
        <text>(9Z)-octadecenoyl-CoA + malonyl-CoA + H(+) = 3-oxo-(11Z)-eicosenoyl-CoA + CO2 + CoA</text>
        <dbReference type="Rhea" id="RHEA:36511"/>
        <dbReference type="ChEBI" id="CHEBI:15378"/>
        <dbReference type="ChEBI" id="CHEBI:16526"/>
        <dbReference type="ChEBI" id="CHEBI:57287"/>
        <dbReference type="ChEBI" id="CHEBI:57384"/>
        <dbReference type="ChEBI" id="CHEBI:57387"/>
        <dbReference type="ChEBI" id="CHEBI:74011"/>
    </reaction>
    <physiologicalReaction direction="left-to-right" evidence="8">
        <dbReference type="Rhea" id="RHEA:36512"/>
    </physiologicalReaction>
</comment>
<comment type="catalytic activity">
    <reaction evidence="3 4 5">
        <text>octadecanoyl-CoA + malonyl-CoA + H(+) = 3-oxoeicosanoyl-CoA + CO2 + CoA</text>
        <dbReference type="Rhea" id="RHEA:35319"/>
        <dbReference type="ChEBI" id="CHEBI:15378"/>
        <dbReference type="ChEBI" id="CHEBI:16526"/>
        <dbReference type="ChEBI" id="CHEBI:57287"/>
        <dbReference type="ChEBI" id="CHEBI:57384"/>
        <dbReference type="ChEBI" id="CHEBI:57394"/>
        <dbReference type="ChEBI" id="CHEBI:65115"/>
    </reaction>
    <physiologicalReaction direction="left-to-right" evidence="8">
        <dbReference type="Rhea" id="RHEA:35320"/>
    </physiologicalReaction>
</comment>
<comment type="catalytic activity">
    <reaction evidence="3 4">
        <text>hexadecanoyl-CoA + malonyl-CoA + H(+) = 3-oxooctadecanoyl-CoA + CO2 + CoA</text>
        <dbReference type="Rhea" id="RHEA:35315"/>
        <dbReference type="ChEBI" id="CHEBI:15378"/>
        <dbReference type="ChEBI" id="CHEBI:16526"/>
        <dbReference type="ChEBI" id="CHEBI:57287"/>
        <dbReference type="ChEBI" id="CHEBI:57379"/>
        <dbReference type="ChEBI" id="CHEBI:57384"/>
        <dbReference type="ChEBI" id="CHEBI:71407"/>
    </reaction>
    <physiologicalReaction direction="left-to-right" evidence="8">
        <dbReference type="Rhea" id="RHEA:35316"/>
    </physiologicalReaction>
</comment>
<comment type="catalytic activity">
    <reaction evidence="3 4">
        <text>(9Z,12Z,15Z)-octadecatrienoyl-CoA + malonyl-CoA + H(+) = (11Z,14Z,17Z)-3-oxoeicosatrienoyl-CoA + CO2 + CoA</text>
        <dbReference type="Rhea" id="RHEA:36523"/>
        <dbReference type="ChEBI" id="CHEBI:15378"/>
        <dbReference type="ChEBI" id="CHEBI:16526"/>
        <dbReference type="ChEBI" id="CHEBI:57287"/>
        <dbReference type="ChEBI" id="CHEBI:57384"/>
        <dbReference type="ChEBI" id="CHEBI:74034"/>
        <dbReference type="ChEBI" id="CHEBI:74054"/>
    </reaction>
    <physiologicalReaction direction="left-to-right" evidence="8">
        <dbReference type="Rhea" id="RHEA:36524"/>
    </physiologicalReaction>
</comment>
<comment type="biophysicochemical properties">
    <kinetics>
        <KM evidence="4">2.6 uM for (9Z,12Z,15Z)-octadecatrienoyl-CoA/C18:3(n-3)-CoA</KM>
        <KM evidence="4">11.7 uM for malonyl-CoA</KM>
        <Vmax evidence="4">0.33 pmol/min/ug enzyme with (9Z,12Z,15Z)-octadecatrienoyl-CoA/C18:3(n-3)-CoA as substrate</Vmax>
        <Vmax evidence="4">0.31 pmol/min/ug enzyme with malonyl-CoA as substrate</Vmax>
    </kinetics>
</comment>
<comment type="pathway">
    <text evidence="1 3 4">Lipid metabolism; fatty acid biosynthesis.</text>
</comment>
<comment type="subunit">
    <text evidence="5 6">Homodimer (PubMed:34117479). Interacts with TECR (PubMed:38422897).</text>
</comment>
<comment type="interaction">
    <interactant intactId="EBI-10285373">
        <id>A1L3X0</id>
    </interactant>
    <interactant intactId="EBI-11277970">
        <id>Q9UHX3</id>
        <label>ADGRE2</label>
    </interactant>
    <organismsDiffer>false</organismsDiffer>
    <experiments>3</experiments>
</comment>
<comment type="interaction">
    <interactant intactId="EBI-10285373">
        <id>A1L3X0</id>
    </interactant>
    <interactant intactId="EBI-465804">
        <id>Q96EV8</id>
        <label>DTNBP1</label>
    </interactant>
    <organismsDiffer>false</organismsDiffer>
    <experiments>3</experiments>
</comment>
<comment type="interaction">
    <interactant intactId="EBI-10285373">
        <id>A1L3X0</id>
    </interactant>
    <interactant intactId="EBI-3907816">
        <id>P54852</id>
        <label>EMP3</label>
    </interactant>
    <organismsDiffer>false</organismsDiffer>
    <experiments>3</experiments>
</comment>
<comment type="interaction">
    <interactant intactId="EBI-10285373">
        <id>A1L3X0</id>
    </interactant>
    <interactant intactId="EBI-718707">
        <id>O75427</id>
        <label>LRCH4</label>
    </interactant>
    <organismsDiffer>false</organismsDiffer>
    <experiments>3</experiments>
</comment>
<comment type="interaction">
    <interactant intactId="EBI-10285373">
        <id>A1L3X0</id>
    </interactant>
    <interactant intactId="EBI-10244780">
        <id>Q5QGT7</id>
        <label>RTP2</label>
    </interactant>
    <organismsDiffer>false</organismsDiffer>
    <experiments>3</experiments>
</comment>
<comment type="interaction">
    <interactant intactId="EBI-10285373">
        <id>A1L3X0</id>
    </interactant>
    <interactant intactId="EBI-2115181">
        <id>O75920</id>
        <label>SERF1B</label>
    </interactant>
    <organismsDiffer>false</organismsDiffer>
    <experiments>3</experiments>
</comment>
<comment type="interaction">
    <interactant intactId="EBI-10285373">
        <id>A1L3X0</id>
    </interactant>
    <interactant intactId="EBI-12266234">
        <id>Q8IVJ1</id>
        <label>SLC41A1</label>
    </interactant>
    <organismsDiffer>false</organismsDiffer>
    <experiments>3</experiments>
</comment>
<comment type="interaction">
    <interactant intactId="EBI-10285373">
        <id>A1L3X0</id>
    </interactant>
    <interactant intactId="EBI-1049004">
        <id>P57105</id>
        <label>SYNJ2BP</label>
    </interactant>
    <organismsDiffer>false</organismsDiffer>
    <experiments>3</experiments>
</comment>
<comment type="interaction">
    <interactant intactId="EBI-10285373">
        <id>A1L3X0</id>
    </interactant>
    <interactant intactId="EBI-2339195">
        <id>Q9P0S9</id>
        <label>TMEM14C</label>
    </interactant>
    <organismsDiffer>false</organismsDiffer>
    <experiments>3</experiments>
</comment>
<comment type="interaction">
    <interactant intactId="EBI-10285373">
        <id>A1L3X0</id>
    </interactant>
    <interactant intactId="EBI-2340110">
        <id>Q8N2K1</id>
        <label>UBE2J2</label>
    </interactant>
    <organismsDiffer>false</organismsDiffer>
    <experiments>3</experiments>
</comment>
<comment type="interaction">
    <interactant intactId="EBI-10285373">
        <id>A1L3X0</id>
    </interactant>
    <interactant intactId="EBI-12097582">
        <id>P23763-3</id>
        <label>VAMP1</label>
    </interactant>
    <organismsDiffer>false</organismsDiffer>
    <experiments>3</experiments>
</comment>
<comment type="subcellular location">
    <subcellularLocation>
        <location evidence="1 3">Endoplasmic reticulum membrane</location>
        <topology evidence="1">Multi-pass membrane protein</topology>
    </subcellularLocation>
</comment>
<comment type="tissue specificity">
    <text evidence="3">Expressed in most tissues except heart and skeletal muscle.</text>
</comment>
<comment type="domain">
    <text evidence="1">The C-terminal di-lysine motif may confer endoplasmic reticulum localization.</text>
</comment>
<comment type="similarity">
    <text evidence="1">Belongs to the ELO family. ELOVL7 subfamily.</text>
</comment>
<comment type="sequence caution" evidence="7">
    <conflict type="erroneous initiation">
        <sequence resource="EMBL-CDS" id="BAB15697"/>
    </conflict>
    <text>Truncated N-terminus.</text>
</comment>
<comment type="sequence caution" evidence="7">
    <conflict type="erroneous termination">
        <sequence resource="EMBL-CDS" id="BAB15697"/>
    </conflict>
    <text>Truncated C-terminus.</text>
</comment>
<comment type="sequence caution" evidence="7">
    <conflict type="frameshift">
        <sequence resource="EMBL-CDS" id="BAB15697"/>
    </conflict>
</comment>
<keyword id="KW-0002">3D-structure</keyword>
<keyword id="KW-0007">Acetylation</keyword>
<keyword id="KW-1015">Disulfide bond</keyword>
<keyword id="KW-0256">Endoplasmic reticulum</keyword>
<keyword id="KW-0275">Fatty acid biosynthesis</keyword>
<keyword id="KW-0276">Fatty acid metabolism</keyword>
<keyword id="KW-0444">Lipid biosynthesis</keyword>
<keyword id="KW-0443">Lipid metabolism</keyword>
<keyword id="KW-0472">Membrane</keyword>
<keyword id="KW-1267">Proteomics identification</keyword>
<keyword id="KW-1185">Reference proteome</keyword>
<keyword id="KW-0808">Transferase</keyword>
<keyword id="KW-0812">Transmembrane</keyword>
<keyword id="KW-1133">Transmembrane helix</keyword>
<organism>
    <name type="scientific">Homo sapiens</name>
    <name type="common">Human</name>
    <dbReference type="NCBI Taxonomy" id="9606"/>
    <lineage>
        <taxon>Eukaryota</taxon>
        <taxon>Metazoa</taxon>
        <taxon>Chordata</taxon>
        <taxon>Craniata</taxon>
        <taxon>Vertebrata</taxon>
        <taxon>Euteleostomi</taxon>
        <taxon>Mammalia</taxon>
        <taxon>Eutheria</taxon>
        <taxon>Euarchontoglires</taxon>
        <taxon>Primates</taxon>
        <taxon>Haplorrhini</taxon>
        <taxon>Catarrhini</taxon>
        <taxon>Hominidae</taxon>
        <taxon>Homo</taxon>
    </lineage>
</organism>
<evidence type="ECO:0000255" key="1">
    <source>
        <dbReference type="HAMAP-Rule" id="MF_03207"/>
    </source>
</evidence>
<evidence type="ECO:0000269" key="2">
    <source>
    </source>
</evidence>
<evidence type="ECO:0000269" key="3">
    <source>
    </source>
</evidence>
<evidence type="ECO:0000269" key="4">
    <source>
    </source>
</evidence>
<evidence type="ECO:0000269" key="5">
    <source>
    </source>
</evidence>
<evidence type="ECO:0000269" key="6">
    <source>
    </source>
</evidence>
<evidence type="ECO:0000305" key="7"/>
<evidence type="ECO:0000305" key="8">
    <source>
    </source>
</evidence>
<evidence type="ECO:0000305" key="9">
    <source>
    </source>
</evidence>
<evidence type="ECO:0007744" key="10">
    <source>
        <dbReference type="PDB" id="6Y7F"/>
    </source>
</evidence>
<evidence type="ECO:0007829" key="11">
    <source>
        <dbReference type="PDB" id="6Y7F"/>
    </source>
</evidence>
<name>ELOV7_HUMAN</name>
<gene>
    <name evidence="1" type="primary">ELOVL7</name>
</gene>
<protein>
    <recommendedName>
        <fullName evidence="1">Very long chain fatty acid elongase 7</fullName>
        <ecNumber evidence="1 3 4 5">2.3.1.199</ecNumber>
    </recommendedName>
    <alternativeName>
        <fullName evidence="1">3-keto acyl-CoA synthase ELOVL7</fullName>
    </alternativeName>
    <alternativeName>
        <fullName evidence="1">ELOVL fatty acid elongase 7</fullName>
        <shortName evidence="1">ELOVL FA elongase 7</shortName>
    </alternativeName>
    <alternativeName>
        <fullName evidence="1">Elongation of very long chain fatty acids protein 7</fullName>
    </alternativeName>
    <alternativeName>
        <fullName evidence="1">Very long chain 3-ketoacyl-CoA synthase 7</fullName>
    </alternativeName>
    <alternativeName>
        <fullName evidence="1">Very long chain 3-oxoacyl-CoA synthase 7</fullName>
    </alternativeName>
</protein>
<proteinExistence type="evidence at protein level"/>